<evidence type="ECO:0000269" key="1">
    <source>
    </source>
</evidence>
<evidence type="ECO:0000305" key="2"/>
<comment type="subcellular location">
    <subcellularLocation>
        <location evidence="1">Cytoplasm</location>
    </subcellularLocation>
</comment>
<comment type="similarity">
    <text evidence="2">Belongs to the STXBP/unc-18/SEC1 family.</text>
</comment>
<accession>O74534</accession>
<protein>
    <recommendedName>
        <fullName>Protein sly1</fullName>
    </recommendedName>
</protein>
<reference key="1">
    <citation type="journal article" date="2002" name="Nature">
        <title>The genome sequence of Schizosaccharomyces pombe.</title>
        <authorList>
            <person name="Wood V."/>
            <person name="Gwilliam R."/>
            <person name="Rajandream M.A."/>
            <person name="Lyne M.H."/>
            <person name="Lyne R."/>
            <person name="Stewart A."/>
            <person name="Sgouros J.G."/>
            <person name="Peat N."/>
            <person name="Hayles J."/>
            <person name="Baker S.G."/>
            <person name="Basham D."/>
            <person name="Bowman S."/>
            <person name="Brooks K."/>
            <person name="Brown D."/>
            <person name="Brown S."/>
            <person name="Chillingworth T."/>
            <person name="Churcher C.M."/>
            <person name="Collins M."/>
            <person name="Connor R."/>
            <person name="Cronin A."/>
            <person name="Davis P."/>
            <person name="Feltwell T."/>
            <person name="Fraser A."/>
            <person name="Gentles S."/>
            <person name="Goble A."/>
            <person name="Hamlin N."/>
            <person name="Harris D.E."/>
            <person name="Hidalgo J."/>
            <person name="Hodgson G."/>
            <person name="Holroyd S."/>
            <person name="Hornsby T."/>
            <person name="Howarth S."/>
            <person name="Huckle E.J."/>
            <person name="Hunt S."/>
            <person name="Jagels K."/>
            <person name="James K.D."/>
            <person name="Jones L."/>
            <person name="Jones M."/>
            <person name="Leather S."/>
            <person name="McDonald S."/>
            <person name="McLean J."/>
            <person name="Mooney P."/>
            <person name="Moule S."/>
            <person name="Mungall K.L."/>
            <person name="Murphy L.D."/>
            <person name="Niblett D."/>
            <person name="Odell C."/>
            <person name="Oliver K."/>
            <person name="O'Neil S."/>
            <person name="Pearson D."/>
            <person name="Quail M.A."/>
            <person name="Rabbinowitsch E."/>
            <person name="Rutherford K.M."/>
            <person name="Rutter S."/>
            <person name="Saunders D."/>
            <person name="Seeger K."/>
            <person name="Sharp S."/>
            <person name="Skelton J."/>
            <person name="Simmonds M.N."/>
            <person name="Squares R."/>
            <person name="Squares S."/>
            <person name="Stevens K."/>
            <person name="Taylor K."/>
            <person name="Taylor R.G."/>
            <person name="Tivey A."/>
            <person name="Walsh S.V."/>
            <person name="Warren T."/>
            <person name="Whitehead S."/>
            <person name="Woodward J.R."/>
            <person name="Volckaert G."/>
            <person name="Aert R."/>
            <person name="Robben J."/>
            <person name="Grymonprez B."/>
            <person name="Weltjens I."/>
            <person name="Vanstreels E."/>
            <person name="Rieger M."/>
            <person name="Schaefer M."/>
            <person name="Mueller-Auer S."/>
            <person name="Gabel C."/>
            <person name="Fuchs M."/>
            <person name="Duesterhoeft A."/>
            <person name="Fritzc C."/>
            <person name="Holzer E."/>
            <person name="Moestl D."/>
            <person name="Hilbert H."/>
            <person name="Borzym K."/>
            <person name="Langer I."/>
            <person name="Beck A."/>
            <person name="Lehrach H."/>
            <person name="Reinhardt R."/>
            <person name="Pohl T.M."/>
            <person name="Eger P."/>
            <person name="Zimmermann W."/>
            <person name="Wedler H."/>
            <person name="Wambutt R."/>
            <person name="Purnelle B."/>
            <person name="Goffeau A."/>
            <person name="Cadieu E."/>
            <person name="Dreano S."/>
            <person name="Gloux S."/>
            <person name="Lelaure V."/>
            <person name="Mottier S."/>
            <person name="Galibert F."/>
            <person name="Aves S.J."/>
            <person name="Xiang Z."/>
            <person name="Hunt C."/>
            <person name="Moore K."/>
            <person name="Hurst S.M."/>
            <person name="Lucas M."/>
            <person name="Rochet M."/>
            <person name="Gaillardin C."/>
            <person name="Tallada V.A."/>
            <person name="Garzon A."/>
            <person name="Thode G."/>
            <person name="Daga R.R."/>
            <person name="Cruzado L."/>
            <person name="Jimenez J."/>
            <person name="Sanchez M."/>
            <person name="del Rey F."/>
            <person name="Benito J."/>
            <person name="Dominguez A."/>
            <person name="Revuelta J.L."/>
            <person name="Moreno S."/>
            <person name="Armstrong J."/>
            <person name="Forsburg S.L."/>
            <person name="Cerutti L."/>
            <person name="Lowe T."/>
            <person name="McCombie W.R."/>
            <person name="Paulsen I."/>
            <person name="Potashkin J."/>
            <person name="Shpakovski G.V."/>
            <person name="Ussery D."/>
            <person name="Barrell B.G."/>
            <person name="Nurse P."/>
        </authorList>
    </citation>
    <scope>NUCLEOTIDE SEQUENCE [LARGE SCALE GENOMIC DNA]</scope>
    <source>
        <strain>972 / ATCC 24843</strain>
    </source>
</reference>
<reference key="2">
    <citation type="journal article" date="2006" name="Nat. Biotechnol.">
        <title>ORFeome cloning and global analysis of protein localization in the fission yeast Schizosaccharomyces pombe.</title>
        <authorList>
            <person name="Matsuyama A."/>
            <person name="Arai R."/>
            <person name="Yashiroda Y."/>
            <person name="Shirai A."/>
            <person name="Kamata A."/>
            <person name="Sekido S."/>
            <person name="Kobayashi Y."/>
            <person name="Hashimoto A."/>
            <person name="Hamamoto M."/>
            <person name="Hiraoka Y."/>
            <person name="Horinouchi S."/>
            <person name="Yoshida M."/>
        </authorList>
    </citation>
    <scope>SUBCELLULAR LOCATION [LARGE SCALE ANALYSIS]</scope>
</reference>
<organism>
    <name type="scientific">Schizosaccharomyces pombe (strain 972 / ATCC 24843)</name>
    <name type="common">Fission yeast</name>
    <dbReference type="NCBI Taxonomy" id="284812"/>
    <lineage>
        <taxon>Eukaryota</taxon>
        <taxon>Fungi</taxon>
        <taxon>Dikarya</taxon>
        <taxon>Ascomycota</taxon>
        <taxon>Taphrinomycotina</taxon>
        <taxon>Schizosaccharomycetes</taxon>
        <taxon>Schizosaccharomycetales</taxon>
        <taxon>Schizosaccharomycetaceae</taxon>
        <taxon>Schizosaccharomyces</taxon>
    </lineage>
</organism>
<dbReference type="EMBL" id="CU329672">
    <property type="protein sequence ID" value="CAA20831.1"/>
    <property type="molecule type" value="Genomic_DNA"/>
</dbReference>
<dbReference type="PIR" id="T41585">
    <property type="entry name" value="T41585"/>
</dbReference>
<dbReference type="RefSeq" id="NP_588374.1">
    <property type="nucleotide sequence ID" value="NM_001023365.2"/>
</dbReference>
<dbReference type="SMR" id="O74534"/>
<dbReference type="BioGRID" id="275668">
    <property type="interactions" value="3"/>
</dbReference>
<dbReference type="FunCoup" id="O74534">
    <property type="interactions" value="920"/>
</dbReference>
<dbReference type="STRING" id="284812.O74534"/>
<dbReference type="iPTMnet" id="O74534"/>
<dbReference type="PaxDb" id="4896-SPCC74.01.1"/>
<dbReference type="EnsemblFungi" id="SPCC74.01.1">
    <property type="protein sequence ID" value="SPCC74.01.1:pep"/>
    <property type="gene ID" value="SPCC74.01"/>
</dbReference>
<dbReference type="GeneID" id="2539096"/>
<dbReference type="KEGG" id="spo:2539096"/>
<dbReference type="PomBase" id="SPCC74.01">
    <property type="gene designation" value="sly1"/>
</dbReference>
<dbReference type="VEuPathDB" id="FungiDB:SPCC74.01"/>
<dbReference type="eggNOG" id="KOG1301">
    <property type="taxonomic scope" value="Eukaryota"/>
</dbReference>
<dbReference type="HOGENOM" id="CLU_016216_3_1_1"/>
<dbReference type="InParanoid" id="O74534"/>
<dbReference type="OMA" id="VNDLRAW"/>
<dbReference type="PhylomeDB" id="O74534"/>
<dbReference type="Reactome" id="R-SPO-204005">
    <property type="pathway name" value="COPII-mediated vesicle transport"/>
</dbReference>
<dbReference type="Reactome" id="R-SPO-8980692">
    <property type="pathway name" value="RHOA GTPase cycle"/>
</dbReference>
<dbReference type="PRO" id="PR:O74534"/>
<dbReference type="Proteomes" id="UP000002485">
    <property type="component" value="Chromosome III"/>
</dbReference>
<dbReference type="GO" id="GO:0005829">
    <property type="term" value="C:cytosol"/>
    <property type="evidence" value="ECO:0007005"/>
    <property type="project" value="PomBase"/>
</dbReference>
<dbReference type="GO" id="GO:0000139">
    <property type="term" value="C:Golgi membrane"/>
    <property type="evidence" value="ECO:0000318"/>
    <property type="project" value="GO_Central"/>
</dbReference>
<dbReference type="GO" id="GO:0019905">
    <property type="term" value="F:syntaxin binding"/>
    <property type="evidence" value="ECO:0000318"/>
    <property type="project" value="GO_Central"/>
</dbReference>
<dbReference type="GO" id="GO:0006888">
    <property type="term" value="P:endoplasmic reticulum to Golgi vesicle-mediated transport"/>
    <property type="evidence" value="ECO:0000318"/>
    <property type="project" value="GO_Central"/>
</dbReference>
<dbReference type="GO" id="GO:0006886">
    <property type="term" value="P:intracellular protein transport"/>
    <property type="evidence" value="ECO:0000318"/>
    <property type="project" value="GO_Central"/>
</dbReference>
<dbReference type="GO" id="GO:0006890">
    <property type="term" value="P:retrograde vesicle-mediated transport, Golgi to endoplasmic reticulum"/>
    <property type="evidence" value="ECO:0000318"/>
    <property type="project" value="GO_Central"/>
</dbReference>
<dbReference type="GO" id="GO:0006904">
    <property type="term" value="P:vesicle docking involved in exocytosis"/>
    <property type="evidence" value="ECO:0000250"/>
    <property type="project" value="PomBase"/>
</dbReference>
<dbReference type="Gene3D" id="1.25.40.60">
    <property type="match status" value="1"/>
</dbReference>
<dbReference type="Gene3D" id="3.40.50.1910">
    <property type="match status" value="1"/>
</dbReference>
<dbReference type="Gene3D" id="3.40.50.2060">
    <property type="match status" value="1"/>
</dbReference>
<dbReference type="Gene3D" id="3.90.830.10">
    <property type="entry name" value="Syntaxin Binding Protein 1, Chain A, domain 2"/>
    <property type="match status" value="1"/>
</dbReference>
<dbReference type="InterPro" id="IPR043154">
    <property type="entry name" value="Sec-1-like_dom1"/>
</dbReference>
<dbReference type="InterPro" id="IPR043127">
    <property type="entry name" value="Sec-1-like_dom3a"/>
</dbReference>
<dbReference type="InterPro" id="IPR001619">
    <property type="entry name" value="Sec1-like"/>
</dbReference>
<dbReference type="InterPro" id="IPR027482">
    <property type="entry name" value="Sec1-like_dom2"/>
</dbReference>
<dbReference type="InterPro" id="IPR036045">
    <property type="entry name" value="Sec1-like_sf"/>
</dbReference>
<dbReference type="PANTHER" id="PTHR11679">
    <property type="entry name" value="VESICLE PROTEIN SORTING-ASSOCIATED"/>
    <property type="match status" value="1"/>
</dbReference>
<dbReference type="Pfam" id="PF00995">
    <property type="entry name" value="Sec1"/>
    <property type="match status" value="1"/>
</dbReference>
<dbReference type="PIRSF" id="PIRSF005715">
    <property type="entry name" value="VPS45_Sec1"/>
    <property type="match status" value="1"/>
</dbReference>
<dbReference type="SUPFAM" id="SSF56815">
    <property type="entry name" value="Sec1/munc18-like (SM) proteins"/>
    <property type="match status" value="1"/>
</dbReference>
<keyword id="KW-0963">Cytoplasm</keyword>
<keyword id="KW-1185">Reference proteome</keyword>
<name>SLY1_SCHPO</name>
<sequence length="639" mass="71665">MSIASVKTPSSLREAQIQSLEKLLNLNQDVNELESSPQHASNFPIWKVLIFDKAGSETISSVLRISDLRKHGVTVHMNITSFRQPIADVPAIYFVQPTQENIELIIEDLSKGLYESAYVCFSSTISRALLEQFAELASKTNTSHMIHQVYDQYLNYVVLESDFFSLQLPKIFHTFHNPSSDEALINSRVQDIVNGLFSVIVTLGTIPIIRCPQGSAAEMVAQKLNQRLKDHLMNTKDAFVSVNPKPRPILILLDRTVDLIPMINHSWTYQALIHDTLNMQLNRITVESVDDGKMTKRFYDLDGNDFFWESNASKPFPKVAENIDEELTRYKNDASEITRKSGVSSLEEVNVDAFADSTYLKSAVSLLPELTARKQILDMHMNIATALLKAIQERHLDDFFQLEDNITGLNRSAILACINNKEQGTPEDKLRFFIIWYLSVDSVPASDLQAYEEALVNNGCTLEALNFVKRVREITKMTMLASSTTRPATGQTGDNLFRGFSSLSTRFTDRFKEAGIGGLENIISGVRNLIPFRKDGTITSIVQSLMDPGSSPASKQTESYLLLDPKSARAITVNNDPRAMNKRQTFSEAIVCVLGGGNYLEYGNLADWAREQNPKKRIIYGSTDILSPSEFMEEMASLS</sequence>
<feature type="chain" id="PRO_0000316617" description="Protein sly1">
    <location>
        <begin position="1"/>
        <end position="639"/>
    </location>
</feature>
<gene>
    <name type="primary">sly1</name>
    <name type="ORF">SPCC74.01</name>
</gene>
<proteinExistence type="inferred from homology"/>